<comment type="function">
    <text evidence="1">May act as a scaffolding protein within caveolar membranes, functionally participating in formation of caveolae or caveolae-like vesicles (By similarity). May be involved in nodule formation.</text>
</comment>
<comment type="subcellular location">
    <subcellularLocation>
        <location evidence="4">Cell membrane</location>
        <topology evidence="4">Lipid-anchor</topology>
    </subcellularLocation>
    <subcellularLocation>
        <location evidence="4">Membrane</location>
        <location evidence="4">Caveola</location>
    </subcellularLocation>
</comment>
<comment type="tissue specificity">
    <text evidence="3">Very low occasional expression in roots and nodules.</text>
</comment>
<comment type="PTM">
    <text evidence="1">May be palmitoylated.</text>
</comment>
<comment type="similarity">
    <text evidence="4">Belongs to the band 7/mec-2 family. Flotillin subfamily.</text>
</comment>
<reference key="1">
    <citation type="journal article" date="2010" name="Proc. Natl. Acad. Sci. U.S.A.">
        <title>Plant flotillins are required for infection by nitrogen-fixing bacteria.</title>
        <authorList>
            <person name="Haney C.H."/>
            <person name="Long S.R."/>
        </authorList>
    </citation>
    <scope>NUCLEOTIDE SEQUENCE [MRNA]</scope>
    <scope>TISSUE SPECIFICITY</scope>
</reference>
<feature type="chain" id="PRO_0000395208" description="Flotillin-like protein 6">
    <location>
        <begin position="1"/>
        <end position="472"/>
    </location>
</feature>
<feature type="coiled-coil region" evidence="2">
    <location>
        <begin position="237"/>
        <end position="327"/>
    </location>
</feature>
<feature type="lipid moiety-binding region" description="S-palmitoyl cysteine" evidence="2">
    <location>
        <position position="37"/>
    </location>
</feature>
<accession>D2XNR2</accession>
<name>FLOT6_MEDTR</name>
<evidence type="ECO:0000250" key="1"/>
<evidence type="ECO:0000255" key="2"/>
<evidence type="ECO:0000269" key="3">
    <source>
    </source>
</evidence>
<evidence type="ECO:0000305" key="4"/>
<keyword id="KW-1003">Cell membrane</keyword>
<keyword id="KW-0175">Coiled coil</keyword>
<keyword id="KW-0449">Lipoprotein</keyword>
<keyword id="KW-0472">Membrane</keyword>
<keyword id="KW-0536">Nodulation</keyword>
<keyword id="KW-0564">Palmitate</keyword>
<protein>
    <recommendedName>
        <fullName>Flotillin-like protein 6</fullName>
    </recommendedName>
</protein>
<proteinExistence type="evidence at transcript level"/>
<organism>
    <name type="scientific">Medicago truncatula</name>
    <name type="common">Barrel medic</name>
    <name type="synonym">Medicago tribuloides</name>
    <dbReference type="NCBI Taxonomy" id="3880"/>
    <lineage>
        <taxon>Eukaryota</taxon>
        <taxon>Viridiplantae</taxon>
        <taxon>Streptophyta</taxon>
        <taxon>Embryophyta</taxon>
        <taxon>Tracheophyta</taxon>
        <taxon>Spermatophyta</taxon>
        <taxon>Magnoliopsida</taxon>
        <taxon>eudicotyledons</taxon>
        <taxon>Gunneridae</taxon>
        <taxon>Pentapetalae</taxon>
        <taxon>rosids</taxon>
        <taxon>fabids</taxon>
        <taxon>Fabales</taxon>
        <taxon>Fabaceae</taxon>
        <taxon>Papilionoideae</taxon>
        <taxon>50 kb inversion clade</taxon>
        <taxon>NPAAA clade</taxon>
        <taxon>Hologalegina</taxon>
        <taxon>IRL clade</taxon>
        <taxon>Trifolieae</taxon>
        <taxon>Medicago</taxon>
    </lineage>
</organism>
<gene>
    <name type="primary">FLOT6</name>
</gene>
<sequence length="472" mass="52387">MKIYRVAKASEYLVITGILIKDIKLAKKAWILPGQSCSVLDLSPVNYTFEVQAMSAEKLPFVLPAVFTIGPRVDDKESLLKYAKLISPHARHSNHVNELVQGIIEGETRVLAASMTMEEVFRGTKQFKQEVFDKVQLELNQFGLLIYNANVKQLVDVRGHEYFSYLGQKTQMEAKNQARVDVAEAKMKGEIGSKLREGQTLQNAAKIDAETKVIAMQRAGEGEKEGIKVRTEVKVFENQREAEVAQANSELAKKKAAWTKAAQVAEVEAKKAVKLREAELQGEVERMNALTTTEKLKAEFLSKASVQYETKVQEANWELYKKQKEAEAILYEKKAEAEAQKASADATFYASKQAAEAELYAKKKEAEGIVTVGQAQGVYVSKLLNALGNDYTAVRDYLMINGGMFQEIAKINAEAIRGLEPKISIWTNGGEAGGMKEVAGVYKMLPPLFKTVHEQTGMLPPAWMGVLPDKNS</sequence>
<dbReference type="EMBL" id="GU224282">
    <property type="protein sequence ID" value="ADA83098.1"/>
    <property type="molecule type" value="mRNA"/>
</dbReference>
<dbReference type="SMR" id="D2XNR2"/>
<dbReference type="PaxDb" id="3880-AES61385"/>
<dbReference type="EnsemblPlants" id="rna4757">
    <property type="protein sequence ID" value="RHN80791.1"/>
    <property type="gene ID" value="gene4757"/>
</dbReference>
<dbReference type="GeneID" id="11408733"/>
<dbReference type="Gramene" id="rna4757">
    <property type="protein sequence ID" value="RHN80791.1"/>
    <property type="gene ID" value="gene4757"/>
</dbReference>
<dbReference type="KEGG" id="mtr:11408733"/>
<dbReference type="eggNOG" id="KOG2668">
    <property type="taxonomic scope" value="Eukaryota"/>
</dbReference>
<dbReference type="HOGENOM" id="CLU_030844_1_1_1"/>
<dbReference type="OMA" id="PAWMGSM"/>
<dbReference type="OrthoDB" id="6080404at2759"/>
<dbReference type="ExpressionAtlas" id="D2XNR2">
    <property type="expression patterns" value="differential"/>
</dbReference>
<dbReference type="GO" id="GO:0005901">
    <property type="term" value="C:caveola"/>
    <property type="evidence" value="ECO:0007669"/>
    <property type="project" value="UniProtKB-SubCell"/>
</dbReference>
<dbReference type="GO" id="GO:0009877">
    <property type="term" value="P:nodulation"/>
    <property type="evidence" value="ECO:0007669"/>
    <property type="project" value="UniProtKB-KW"/>
</dbReference>
<dbReference type="CDD" id="cd03399">
    <property type="entry name" value="SPFH_flotillin"/>
    <property type="match status" value="1"/>
</dbReference>
<dbReference type="FunFam" id="3.30.479.30:FF:000015">
    <property type="entry name" value="Flotillin-like protein 2"/>
    <property type="match status" value="1"/>
</dbReference>
<dbReference type="Gene3D" id="3.30.479.30">
    <property type="entry name" value="Band 7 domain"/>
    <property type="match status" value="1"/>
</dbReference>
<dbReference type="InterPro" id="IPR001107">
    <property type="entry name" value="Band_7"/>
</dbReference>
<dbReference type="InterPro" id="IPR036013">
    <property type="entry name" value="Band_7/SPFH_dom_sf"/>
</dbReference>
<dbReference type="InterPro" id="IPR027705">
    <property type="entry name" value="Flotillin_fam"/>
</dbReference>
<dbReference type="PANTHER" id="PTHR13806:SF31">
    <property type="entry name" value="FLOTILLIN-LIKE PROTEIN 1-RELATED"/>
    <property type="match status" value="1"/>
</dbReference>
<dbReference type="PANTHER" id="PTHR13806">
    <property type="entry name" value="FLOTILLIN-RELATED"/>
    <property type="match status" value="1"/>
</dbReference>
<dbReference type="Pfam" id="PF01145">
    <property type="entry name" value="Band_7"/>
    <property type="match status" value="1"/>
</dbReference>
<dbReference type="SUPFAM" id="SSF117892">
    <property type="entry name" value="Band 7/SPFH domain"/>
    <property type="match status" value="1"/>
</dbReference>